<gene>
    <name type="ordered locus">At5g25300</name>
    <name type="ORF">F18G18.40</name>
</gene>
<reference key="1">
    <citation type="journal article" date="2000" name="Nature">
        <title>Sequence and analysis of chromosome 5 of the plant Arabidopsis thaliana.</title>
        <authorList>
            <person name="Tabata S."/>
            <person name="Kaneko T."/>
            <person name="Nakamura Y."/>
            <person name="Kotani H."/>
            <person name="Kato T."/>
            <person name="Asamizu E."/>
            <person name="Miyajima N."/>
            <person name="Sasamoto S."/>
            <person name="Kimura T."/>
            <person name="Hosouchi T."/>
            <person name="Kawashima K."/>
            <person name="Kohara M."/>
            <person name="Matsumoto M."/>
            <person name="Matsuno A."/>
            <person name="Muraki A."/>
            <person name="Nakayama S."/>
            <person name="Nakazaki N."/>
            <person name="Naruo K."/>
            <person name="Okumura S."/>
            <person name="Shinpo S."/>
            <person name="Takeuchi C."/>
            <person name="Wada T."/>
            <person name="Watanabe A."/>
            <person name="Yamada M."/>
            <person name="Yasuda M."/>
            <person name="Sato S."/>
            <person name="de la Bastide M."/>
            <person name="Huang E."/>
            <person name="Spiegel L."/>
            <person name="Gnoj L."/>
            <person name="O'Shaughnessy A."/>
            <person name="Preston R."/>
            <person name="Habermann K."/>
            <person name="Murray J."/>
            <person name="Johnson D."/>
            <person name="Rohlfing T."/>
            <person name="Nelson J."/>
            <person name="Stoneking T."/>
            <person name="Pepin K."/>
            <person name="Spieth J."/>
            <person name="Sekhon M."/>
            <person name="Armstrong J."/>
            <person name="Becker M."/>
            <person name="Belter E."/>
            <person name="Cordum H."/>
            <person name="Cordes M."/>
            <person name="Courtney L."/>
            <person name="Courtney W."/>
            <person name="Dante M."/>
            <person name="Du H."/>
            <person name="Edwards J."/>
            <person name="Fryman J."/>
            <person name="Haakensen B."/>
            <person name="Lamar E."/>
            <person name="Latreille P."/>
            <person name="Leonard S."/>
            <person name="Meyer R."/>
            <person name="Mulvaney E."/>
            <person name="Ozersky P."/>
            <person name="Riley A."/>
            <person name="Strowmatt C."/>
            <person name="Wagner-McPherson C."/>
            <person name="Wollam A."/>
            <person name="Yoakum M."/>
            <person name="Bell M."/>
            <person name="Dedhia N."/>
            <person name="Parnell L."/>
            <person name="Shah R."/>
            <person name="Rodriguez M."/>
            <person name="Hoon See L."/>
            <person name="Vil D."/>
            <person name="Baker J."/>
            <person name="Kirchoff K."/>
            <person name="Toth K."/>
            <person name="King L."/>
            <person name="Bahret A."/>
            <person name="Miller B."/>
            <person name="Marra M.A."/>
            <person name="Martienssen R."/>
            <person name="McCombie W.R."/>
            <person name="Wilson R.K."/>
            <person name="Murphy G."/>
            <person name="Bancroft I."/>
            <person name="Volckaert G."/>
            <person name="Wambutt R."/>
            <person name="Duesterhoeft A."/>
            <person name="Stiekema W."/>
            <person name="Pohl T."/>
            <person name="Entian K.-D."/>
            <person name="Terryn N."/>
            <person name="Hartley N."/>
            <person name="Bent E."/>
            <person name="Johnson S."/>
            <person name="Langham S.-A."/>
            <person name="McCullagh B."/>
            <person name="Robben J."/>
            <person name="Grymonprez B."/>
            <person name="Zimmermann W."/>
            <person name="Ramsperger U."/>
            <person name="Wedler H."/>
            <person name="Balke K."/>
            <person name="Wedler E."/>
            <person name="Peters S."/>
            <person name="van Staveren M."/>
            <person name="Dirkse W."/>
            <person name="Mooijman P."/>
            <person name="Klein Lankhorst R."/>
            <person name="Weitzenegger T."/>
            <person name="Bothe G."/>
            <person name="Rose M."/>
            <person name="Hauf J."/>
            <person name="Berneiser S."/>
            <person name="Hempel S."/>
            <person name="Feldpausch M."/>
            <person name="Lamberth S."/>
            <person name="Villarroel R."/>
            <person name="Gielen J."/>
            <person name="Ardiles W."/>
            <person name="Bents O."/>
            <person name="Lemcke K."/>
            <person name="Kolesov G."/>
            <person name="Mayer K.F.X."/>
            <person name="Rudd S."/>
            <person name="Schoof H."/>
            <person name="Schueller C."/>
            <person name="Zaccaria P."/>
            <person name="Mewes H.-W."/>
            <person name="Bevan M."/>
            <person name="Fransz P.F."/>
        </authorList>
    </citation>
    <scope>NUCLEOTIDE SEQUENCE [LARGE SCALE GENOMIC DNA]</scope>
    <source>
        <strain>cv. Columbia</strain>
    </source>
</reference>
<reference key="2">
    <citation type="journal article" date="2017" name="Plant J.">
        <title>Araport11: a complete reannotation of the Arabidopsis thaliana reference genome.</title>
        <authorList>
            <person name="Cheng C.Y."/>
            <person name="Krishnakumar V."/>
            <person name="Chan A.P."/>
            <person name="Thibaud-Nissen F."/>
            <person name="Schobel S."/>
            <person name="Town C.D."/>
        </authorList>
    </citation>
    <scope>GENOME REANNOTATION</scope>
    <source>
        <strain>cv. Columbia</strain>
    </source>
</reference>
<accession>Q3E960</accession>
<dbReference type="EMBL" id="AC006258">
    <property type="status" value="NOT_ANNOTATED_CDS"/>
    <property type="molecule type" value="Genomic_DNA"/>
</dbReference>
<dbReference type="EMBL" id="CP002688">
    <property type="protein sequence ID" value="AED93424.1"/>
    <property type="molecule type" value="Genomic_DNA"/>
</dbReference>
<dbReference type="RefSeq" id="NP_197912.4">
    <property type="nucleotide sequence ID" value="NM_122439.4"/>
</dbReference>
<dbReference type="FunCoup" id="Q3E960">
    <property type="interactions" value="14"/>
</dbReference>
<dbReference type="PaxDb" id="3702-AT5G25300.1"/>
<dbReference type="EnsemblPlants" id="AT5G25300.1">
    <property type="protein sequence ID" value="AT5G25300.1"/>
    <property type="gene ID" value="AT5G25300"/>
</dbReference>
<dbReference type="GeneID" id="832602"/>
<dbReference type="Gramene" id="AT5G25300.1">
    <property type="protein sequence ID" value="AT5G25300.1"/>
    <property type="gene ID" value="AT5G25300"/>
</dbReference>
<dbReference type="KEGG" id="ath:AT5G25300"/>
<dbReference type="Araport" id="AT5G25300"/>
<dbReference type="TAIR" id="AT5G25300">
    <property type="gene designation" value="ATFDB36"/>
</dbReference>
<dbReference type="HOGENOM" id="CLU_572876_0_0_1"/>
<dbReference type="InParanoid" id="Q3E960"/>
<dbReference type="PhylomeDB" id="Q3E960"/>
<dbReference type="PRO" id="PR:Q3E960"/>
<dbReference type="Proteomes" id="UP000006548">
    <property type="component" value="Chromosome 5"/>
</dbReference>
<dbReference type="ExpressionAtlas" id="Q3E960">
    <property type="expression patterns" value="baseline"/>
</dbReference>
<dbReference type="InterPro" id="IPR036047">
    <property type="entry name" value="F-box-like_dom_sf"/>
</dbReference>
<dbReference type="InterPro" id="IPR050942">
    <property type="entry name" value="F-box_BR-signaling"/>
</dbReference>
<dbReference type="InterPro" id="IPR005174">
    <property type="entry name" value="KIB1-4_b-propeller"/>
</dbReference>
<dbReference type="PANTHER" id="PTHR44259:SF31">
    <property type="entry name" value="F-BOX FAMILY PROTEIN"/>
    <property type="match status" value="1"/>
</dbReference>
<dbReference type="PANTHER" id="PTHR44259">
    <property type="entry name" value="OS07G0183000 PROTEIN-RELATED"/>
    <property type="match status" value="1"/>
</dbReference>
<dbReference type="Pfam" id="PF03478">
    <property type="entry name" value="Beta-prop_KIB1-4"/>
    <property type="match status" value="1"/>
</dbReference>
<dbReference type="SUPFAM" id="SSF81383">
    <property type="entry name" value="F-box domain"/>
    <property type="match status" value="1"/>
</dbReference>
<sequence>MDTTNSSRWSELPIDILRSLLEQKGGCAIYNPDEAKDYKTKRDSSGIRFLANSVNWFLVLDSRSNLYIIDVFSEKKIDLPPLESIKNGLYSLEQVGDEKKKEYIVVWFFDKGTEYIAFCKNGEDHYRDIPIRKNVCKELQDLYDMLLHGGNNLYISKTRQSIRKLRFFEEEGFIDVDNSEILPFRKISFYIDGARFSNNIAVTTSREVLLVQNFFYETTRYRSFRLYKKDPNPDLNATINNPYPMVELCSLGDVSASGFGDRKRSCLDMCMFNLVTKKLKRFPDLSNLKLTDARCTTTSSGNNWKFSIIVSEVIDSKFLELRFADLDSESQQQTKLKFSMLKSEFVDMNKEDSQIEINEKETKINQEHDQSDETQAKRRRSLTSSVWQDLVSVGGEANVKEIDRSMETPNSSPPWSELPGDILRSVFERLSFVDFQRAKQTCPIKRSKSNCLRLWLITFGGLERLPHLSSVCFISWT</sequence>
<keyword id="KW-0175">Coiled coil</keyword>
<keyword id="KW-1185">Reference proteome</keyword>
<proteinExistence type="predicted"/>
<protein>
    <recommendedName>
        <fullName>Probable F-box protein At5g25300</fullName>
    </recommendedName>
</protein>
<organism>
    <name type="scientific">Arabidopsis thaliana</name>
    <name type="common">Mouse-ear cress</name>
    <dbReference type="NCBI Taxonomy" id="3702"/>
    <lineage>
        <taxon>Eukaryota</taxon>
        <taxon>Viridiplantae</taxon>
        <taxon>Streptophyta</taxon>
        <taxon>Embryophyta</taxon>
        <taxon>Tracheophyta</taxon>
        <taxon>Spermatophyta</taxon>
        <taxon>Magnoliopsida</taxon>
        <taxon>eudicotyledons</taxon>
        <taxon>Gunneridae</taxon>
        <taxon>Pentapetalae</taxon>
        <taxon>rosids</taxon>
        <taxon>malvids</taxon>
        <taxon>Brassicales</taxon>
        <taxon>Brassicaceae</taxon>
        <taxon>Camelineae</taxon>
        <taxon>Arabidopsis</taxon>
    </lineage>
</organism>
<feature type="chain" id="PRO_0000396053" description="Probable F-box protein At5g25300">
    <location>
        <begin position="1"/>
        <end position="477"/>
    </location>
</feature>
<feature type="domain" description="F-box">
    <location>
        <begin position="412"/>
        <end position="458"/>
    </location>
</feature>
<feature type="coiled-coil region" evidence="1">
    <location>
        <begin position="346"/>
        <end position="377"/>
    </location>
</feature>
<evidence type="ECO:0000255" key="1"/>
<name>FB337_ARATH</name>